<sequence length="437" mass="50283">MIDYSAILNRYRPDEQELQKLKSISEYLTTRASEICRHKNIRADPVLVGSYAKGTNLKDGDLDLFIAFDRDYEEKIMEKLGLSIGHDLLPNGKEKYAEHPYVSGEIDGIKIDVVPCFKMEFGQKKISAVDRTLLHTRYVNEKLDGASKDQVRLLKVFMKSVGVYGAEARTYGFSGYLCELLIIRYGNFENVLRLFSTTRGRLKIDDDERFEDPMVLIDPVDPDRNVASAVSLESLSRMRIASKMFLDNPSESFFDLERKPIKPKYHDRGTCIRIYSIEKPDLTDDVLYPQIYKFKLALLRLMEEYNMEPVGSAIDVADRIYVLIETRKFISDSIRIHVGPPADTSNSIDFIKKWLTRERSRGPYLVGNRLYVDTVEERKTPEEIVLSNISKYSIGKNLDKLKNTIKVQKFEEIKGRIRVLDRFFSEEAFGGLNSLSA</sequence>
<proteinExistence type="inferred from homology"/>
<name>CCA_THEVO</name>
<dbReference type="EC" id="2.7.7.72" evidence="1"/>
<dbReference type="EMBL" id="BA000011">
    <property type="protein sequence ID" value="BAB59259.1"/>
    <property type="molecule type" value="Genomic_DNA"/>
</dbReference>
<dbReference type="RefSeq" id="WP_010916373.1">
    <property type="nucleotide sequence ID" value="NC_002689.2"/>
</dbReference>
<dbReference type="SMR" id="Q97CI4"/>
<dbReference type="STRING" id="273116.gene:9380885"/>
<dbReference type="PaxDb" id="273116-14324331"/>
<dbReference type="GeneID" id="1441603"/>
<dbReference type="KEGG" id="tvo:TVG0124714"/>
<dbReference type="eggNOG" id="arCOG04249">
    <property type="taxonomic scope" value="Archaea"/>
</dbReference>
<dbReference type="HOGENOM" id="CLU_044679_1_0_2"/>
<dbReference type="OrthoDB" id="7378at2157"/>
<dbReference type="PhylomeDB" id="Q97CI4"/>
<dbReference type="Proteomes" id="UP000001017">
    <property type="component" value="Chromosome"/>
</dbReference>
<dbReference type="GO" id="GO:0005524">
    <property type="term" value="F:ATP binding"/>
    <property type="evidence" value="ECO:0007669"/>
    <property type="project" value="UniProtKB-UniRule"/>
</dbReference>
<dbReference type="GO" id="GO:0004810">
    <property type="term" value="F:CCA tRNA nucleotidyltransferase activity"/>
    <property type="evidence" value="ECO:0007669"/>
    <property type="project" value="UniProtKB-UniRule"/>
</dbReference>
<dbReference type="GO" id="GO:0000287">
    <property type="term" value="F:magnesium ion binding"/>
    <property type="evidence" value="ECO:0007669"/>
    <property type="project" value="UniProtKB-UniRule"/>
</dbReference>
<dbReference type="GO" id="GO:0000049">
    <property type="term" value="F:tRNA binding"/>
    <property type="evidence" value="ECO:0007669"/>
    <property type="project" value="UniProtKB-UniRule"/>
</dbReference>
<dbReference type="GO" id="GO:0042245">
    <property type="term" value="P:RNA repair"/>
    <property type="evidence" value="ECO:0007669"/>
    <property type="project" value="UniProtKB-KW"/>
</dbReference>
<dbReference type="GO" id="GO:0001680">
    <property type="term" value="P:tRNA 3'-terminal CCA addition"/>
    <property type="evidence" value="ECO:0007669"/>
    <property type="project" value="UniProtKB-UniRule"/>
</dbReference>
<dbReference type="CDD" id="cd05400">
    <property type="entry name" value="NT_2-5OAS_ClassI-CCAase"/>
    <property type="match status" value="1"/>
</dbReference>
<dbReference type="Gene3D" id="3.30.70.1550">
    <property type="entry name" value="Archaeal tRNA CCA-adding enzyme catalytic domain"/>
    <property type="match status" value="1"/>
</dbReference>
<dbReference type="Gene3D" id="3.30.460.10">
    <property type="entry name" value="Beta Polymerase, domain 2"/>
    <property type="match status" value="1"/>
</dbReference>
<dbReference type="Gene3D" id="1.10.1410.30">
    <property type="entry name" value="CCA tRNA nucleotidyltransferase, domain 2"/>
    <property type="match status" value="1"/>
</dbReference>
<dbReference type="Gene3D" id="3.30.70.590">
    <property type="entry name" value="Poly(A) polymerase predicted RNA binding domain"/>
    <property type="match status" value="1"/>
</dbReference>
<dbReference type="HAMAP" id="MF_01264">
    <property type="entry name" value="CCA_arch"/>
    <property type="match status" value="1"/>
</dbReference>
<dbReference type="InterPro" id="IPR048833">
    <property type="entry name" value="CAA_C"/>
</dbReference>
<dbReference type="InterPro" id="IPR008229">
    <property type="entry name" value="CCA-adding_arc"/>
</dbReference>
<dbReference type="InterPro" id="IPR042090">
    <property type="entry name" value="CCA_tRNA_nucleotrans_2"/>
</dbReference>
<dbReference type="InterPro" id="IPR006116">
    <property type="entry name" value="NT_2-5OAS_ClassI-CCAase"/>
</dbReference>
<dbReference type="InterPro" id="IPR043519">
    <property type="entry name" value="NT_sf"/>
</dbReference>
<dbReference type="InterPro" id="IPR011068">
    <property type="entry name" value="NuclTrfase_I-like_C"/>
</dbReference>
<dbReference type="InterPro" id="IPR002934">
    <property type="entry name" value="Polymerase_NTP_transf_dom"/>
</dbReference>
<dbReference type="InterPro" id="IPR015329">
    <property type="entry name" value="tRNA_NucTransf2"/>
</dbReference>
<dbReference type="NCBIfam" id="TIGR03671">
    <property type="entry name" value="cca_archaeal"/>
    <property type="match status" value="1"/>
</dbReference>
<dbReference type="PANTHER" id="PTHR39643">
    <property type="entry name" value="CCA-ADDING ENZYME"/>
    <property type="match status" value="1"/>
</dbReference>
<dbReference type="PANTHER" id="PTHR39643:SF1">
    <property type="entry name" value="CCA-ADDING ENZYME"/>
    <property type="match status" value="1"/>
</dbReference>
<dbReference type="Pfam" id="PF21133">
    <property type="entry name" value="CAA_C"/>
    <property type="match status" value="1"/>
</dbReference>
<dbReference type="Pfam" id="PF01909">
    <property type="entry name" value="NTP_transf_2"/>
    <property type="match status" value="1"/>
</dbReference>
<dbReference type="Pfam" id="PF09249">
    <property type="entry name" value="tRNA_NucTransf2"/>
    <property type="match status" value="1"/>
</dbReference>
<dbReference type="PIRSF" id="PIRSF005335">
    <property type="entry name" value="CCA_arch"/>
    <property type="match status" value="1"/>
</dbReference>
<dbReference type="SUPFAM" id="SSF81301">
    <property type="entry name" value="Nucleotidyltransferase"/>
    <property type="match status" value="1"/>
</dbReference>
<dbReference type="SUPFAM" id="SSF55003">
    <property type="entry name" value="PAP/Archaeal CCA-adding enzyme, C-terminal domain"/>
    <property type="match status" value="1"/>
</dbReference>
<dbReference type="SUPFAM" id="SSF81631">
    <property type="entry name" value="PAP/OAS1 substrate-binding domain"/>
    <property type="match status" value="1"/>
</dbReference>
<organism>
    <name type="scientific">Thermoplasma volcanium (strain ATCC 51530 / DSM 4299 / JCM 9571 / NBRC 15438 / GSS1)</name>
    <dbReference type="NCBI Taxonomy" id="273116"/>
    <lineage>
        <taxon>Archaea</taxon>
        <taxon>Methanobacteriati</taxon>
        <taxon>Thermoplasmatota</taxon>
        <taxon>Thermoplasmata</taxon>
        <taxon>Thermoplasmatales</taxon>
        <taxon>Thermoplasmataceae</taxon>
        <taxon>Thermoplasma</taxon>
    </lineage>
</organism>
<comment type="function">
    <text evidence="1">Catalyzes the addition and repair of the essential 3'-terminal CCA sequence in tRNAs without using a nucleic acid template. Adds these three nucleotides in the order of C, C, and A to the tRNA nucleotide-73, using CTP and ATP as substrates and producing inorganic pyrophosphate. tRNA 3'-terminal CCA addition is required both for tRNA processing and repair. Also involved in tRNA surveillance by mediating tandem CCA addition to generate a CCACCA at the 3' terminus of unstable tRNAs. While stable tRNAs receive only 3'-terminal CCA, unstable tRNAs are marked with CCACCA and rapidly degraded.</text>
</comment>
<comment type="catalytic activity">
    <reaction evidence="1">
        <text>a tRNA precursor + 2 CTP + ATP = a tRNA with a 3' CCA end + 3 diphosphate</text>
        <dbReference type="Rhea" id="RHEA:14433"/>
        <dbReference type="Rhea" id="RHEA-COMP:10465"/>
        <dbReference type="Rhea" id="RHEA-COMP:10468"/>
        <dbReference type="ChEBI" id="CHEBI:30616"/>
        <dbReference type="ChEBI" id="CHEBI:33019"/>
        <dbReference type="ChEBI" id="CHEBI:37563"/>
        <dbReference type="ChEBI" id="CHEBI:74896"/>
        <dbReference type="ChEBI" id="CHEBI:83071"/>
        <dbReference type="EC" id="2.7.7.72"/>
    </reaction>
</comment>
<comment type="catalytic activity">
    <reaction evidence="1">
        <text>a tRNA with a 3' CCA end + 2 CTP + ATP = a tRNA with a 3' CCACCA end + 3 diphosphate</text>
        <dbReference type="Rhea" id="RHEA:76235"/>
        <dbReference type="Rhea" id="RHEA-COMP:10468"/>
        <dbReference type="Rhea" id="RHEA-COMP:18655"/>
        <dbReference type="ChEBI" id="CHEBI:30616"/>
        <dbReference type="ChEBI" id="CHEBI:33019"/>
        <dbReference type="ChEBI" id="CHEBI:37563"/>
        <dbReference type="ChEBI" id="CHEBI:83071"/>
        <dbReference type="ChEBI" id="CHEBI:195187"/>
    </reaction>
    <physiologicalReaction direction="left-to-right" evidence="1">
        <dbReference type="Rhea" id="RHEA:76236"/>
    </physiologicalReaction>
</comment>
<comment type="cofactor">
    <cofactor evidence="1">
        <name>Mg(2+)</name>
        <dbReference type="ChEBI" id="CHEBI:18420"/>
    </cofactor>
</comment>
<comment type="subunit">
    <text evidence="1">Homodimer.</text>
</comment>
<comment type="miscellaneous">
    <text evidence="1">A single active site specifically recognizes both ATP and CTP and is responsible for their addition.</text>
</comment>
<comment type="similarity">
    <text evidence="1">Belongs to the tRNA nucleotidyltransferase/poly(A) polymerase family. Archaeal CCA-adding enzyme subfamily.</text>
</comment>
<keyword id="KW-0067">ATP-binding</keyword>
<keyword id="KW-0460">Magnesium</keyword>
<keyword id="KW-0479">Metal-binding</keyword>
<keyword id="KW-0547">Nucleotide-binding</keyword>
<keyword id="KW-0548">Nucleotidyltransferase</keyword>
<keyword id="KW-0692">RNA repair</keyword>
<keyword id="KW-0694">RNA-binding</keyword>
<keyword id="KW-0808">Transferase</keyword>
<keyword id="KW-0819">tRNA processing</keyword>
<gene>
    <name evidence="1" type="primary">cca</name>
    <name type="ordered locus">TV0117</name>
    <name type="ORF">TVG0124714</name>
</gene>
<reference key="1">
    <citation type="journal article" date="2000" name="Proc. Natl. Acad. Sci. U.S.A.">
        <title>Archaeal adaptation to higher temperatures revealed by genomic sequence of Thermoplasma volcanium.</title>
        <authorList>
            <person name="Kawashima T."/>
            <person name="Amano N."/>
            <person name="Koike H."/>
            <person name="Makino S."/>
            <person name="Higuchi S."/>
            <person name="Kawashima-Ohya Y."/>
            <person name="Watanabe K."/>
            <person name="Yamazaki M."/>
            <person name="Kanehori K."/>
            <person name="Kawamoto T."/>
            <person name="Nunoshiba T."/>
            <person name="Yamamoto Y."/>
            <person name="Aramaki H."/>
            <person name="Makino K."/>
            <person name="Suzuki M."/>
        </authorList>
    </citation>
    <scope>NUCLEOTIDE SEQUENCE [LARGE SCALE GENOMIC DNA]</scope>
    <source>
        <strain>ATCC 51530 / DSM 4299 / JCM 9571 / NBRC 15438 / GSS1</strain>
    </source>
</reference>
<feature type="chain" id="PRO_0000139087" description="CCA-adding enzyme">
    <location>
        <begin position="1"/>
        <end position="437"/>
    </location>
</feature>
<feature type="binding site" evidence="1">
    <location>
        <position position="50"/>
    </location>
    <ligand>
        <name>ATP</name>
        <dbReference type="ChEBI" id="CHEBI:30616"/>
    </ligand>
</feature>
<feature type="binding site" evidence="1">
    <location>
        <position position="50"/>
    </location>
    <ligand>
        <name>CTP</name>
        <dbReference type="ChEBI" id="CHEBI:37563"/>
    </ligand>
</feature>
<feature type="binding site" evidence="1">
    <location>
        <position position="53"/>
    </location>
    <ligand>
        <name>ATP</name>
        <dbReference type="ChEBI" id="CHEBI:30616"/>
    </ligand>
</feature>
<feature type="binding site" evidence="1">
    <location>
        <position position="53"/>
    </location>
    <ligand>
        <name>CTP</name>
        <dbReference type="ChEBI" id="CHEBI:37563"/>
    </ligand>
</feature>
<feature type="binding site" evidence="1">
    <location>
        <position position="61"/>
    </location>
    <ligand>
        <name>Mg(2+)</name>
        <dbReference type="ChEBI" id="CHEBI:18420"/>
    </ligand>
</feature>
<feature type="binding site" evidence="1">
    <location>
        <position position="63"/>
    </location>
    <ligand>
        <name>Mg(2+)</name>
        <dbReference type="ChEBI" id="CHEBI:18420"/>
    </ligand>
</feature>
<feature type="binding site" evidence="1">
    <location>
        <position position="112"/>
    </location>
    <ligand>
        <name>Mg(2+)</name>
        <dbReference type="ChEBI" id="CHEBI:18420"/>
    </ligand>
</feature>
<feature type="binding site" evidence="1">
    <location>
        <position position="135"/>
    </location>
    <ligand>
        <name>ATP</name>
        <dbReference type="ChEBI" id="CHEBI:30616"/>
    </ligand>
</feature>
<feature type="binding site" evidence="1">
    <location>
        <position position="135"/>
    </location>
    <ligand>
        <name>CTP</name>
        <dbReference type="ChEBI" id="CHEBI:37563"/>
    </ligand>
</feature>
<feature type="binding site" evidence="1">
    <location>
        <position position="155"/>
    </location>
    <ligand>
        <name>ATP</name>
        <dbReference type="ChEBI" id="CHEBI:30616"/>
    </ligand>
</feature>
<feature type="binding site" evidence="1">
    <location>
        <position position="155"/>
    </location>
    <ligand>
        <name>CTP</name>
        <dbReference type="ChEBI" id="CHEBI:37563"/>
    </ligand>
</feature>
<feature type="binding site" evidence="1">
    <location>
        <position position="164"/>
    </location>
    <ligand>
        <name>ATP</name>
        <dbReference type="ChEBI" id="CHEBI:30616"/>
    </ligand>
</feature>
<feature type="binding site" evidence="1">
    <location>
        <position position="164"/>
    </location>
    <ligand>
        <name>CTP</name>
        <dbReference type="ChEBI" id="CHEBI:37563"/>
    </ligand>
</feature>
<protein>
    <recommendedName>
        <fullName evidence="1">CCA-adding enzyme</fullName>
        <ecNumber evidence="1">2.7.7.72</ecNumber>
    </recommendedName>
    <alternativeName>
        <fullName evidence="1">CCA tRNA nucleotidyltransferase</fullName>
    </alternativeName>
    <alternativeName>
        <fullName evidence="1">tRNA CCA-pyrophosphorylase</fullName>
    </alternativeName>
    <alternativeName>
        <fullName evidence="1">tRNA adenylyl-/cytidylyl- transferase</fullName>
    </alternativeName>
    <alternativeName>
        <fullName evidence="1">tRNA nucleotidyltransferase</fullName>
    </alternativeName>
    <alternativeName>
        <fullName evidence="1">tRNA-NT</fullName>
    </alternativeName>
</protein>
<evidence type="ECO:0000255" key="1">
    <source>
        <dbReference type="HAMAP-Rule" id="MF_01264"/>
    </source>
</evidence>
<accession>Q97CI4</accession>